<dbReference type="EC" id="3.4.21.109"/>
<dbReference type="EMBL" id="AF042822">
    <property type="protein sequence ID" value="AAD02230.3"/>
    <property type="molecule type" value="mRNA"/>
</dbReference>
<dbReference type="EMBL" id="BC005496">
    <property type="protein sequence ID" value="AAH05496.1"/>
    <property type="molecule type" value="mRNA"/>
</dbReference>
<dbReference type="CCDS" id="CCDS22948.1"/>
<dbReference type="RefSeq" id="NP_035306.2">
    <property type="nucleotide sequence ID" value="NM_011176.4"/>
</dbReference>
<dbReference type="SMR" id="P56677"/>
<dbReference type="FunCoup" id="P56677">
    <property type="interactions" value="181"/>
</dbReference>
<dbReference type="STRING" id="10090.ENSMUSP00000034478"/>
<dbReference type="BindingDB" id="P56677"/>
<dbReference type="ChEMBL" id="CHEMBL3745587"/>
<dbReference type="MEROPS" id="S01.302"/>
<dbReference type="GlyCosmos" id="P56677">
    <property type="glycosylation" value="6 sites, No reported glycans"/>
</dbReference>
<dbReference type="GlyGen" id="P56677">
    <property type="glycosylation" value="6 sites, 2 N-linked glycans (2 sites)"/>
</dbReference>
<dbReference type="iPTMnet" id="P56677"/>
<dbReference type="PhosphoSitePlus" id="P56677"/>
<dbReference type="PaxDb" id="10090-ENSMUSP00000034478"/>
<dbReference type="PeptideAtlas" id="P56677"/>
<dbReference type="ProteomicsDB" id="257425"/>
<dbReference type="Antibodypedia" id="33087">
    <property type="antibodies" value="429 antibodies from 36 providers"/>
</dbReference>
<dbReference type="DNASU" id="19143"/>
<dbReference type="Ensembl" id="ENSMUST00000034478.3">
    <property type="protein sequence ID" value="ENSMUSP00000034478.3"/>
    <property type="gene ID" value="ENSMUSG00000031995.10"/>
</dbReference>
<dbReference type="GeneID" id="19143"/>
<dbReference type="KEGG" id="mmu:19143"/>
<dbReference type="UCSC" id="uc009ori.1">
    <property type="organism name" value="mouse"/>
</dbReference>
<dbReference type="AGR" id="MGI:1338881"/>
<dbReference type="CTD" id="6768"/>
<dbReference type="MGI" id="MGI:1338881">
    <property type="gene designation" value="St14"/>
</dbReference>
<dbReference type="VEuPathDB" id="HostDB:ENSMUSG00000031995"/>
<dbReference type="eggNOG" id="KOG3627">
    <property type="taxonomic scope" value="Eukaryota"/>
</dbReference>
<dbReference type="GeneTree" id="ENSGT00940000155418"/>
<dbReference type="HOGENOM" id="CLU_006842_19_3_1"/>
<dbReference type="InParanoid" id="P56677"/>
<dbReference type="OMA" id="LWTAYMG"/>
<dbReference type="OrthoDB" id="6380398at2759"/>
<dbReference type="PhylomeDB" id="P56677"/>
<dbReference type="TreeFam" id="TF330647"/>
<dbReference type="BioGRID-ORCS" id="19143">
    <property type="hits" value="0 hits in 79 CRISPR screens"/>
</dbReference>
<dbReference type="ChiTaRS" id="St14">
    <property type="organism name" value="mouse"/>
</dbReference>
<dbReference type="PRO" id="PR:P56677"/>
<dbReference type="Proteomes" id="UP000000589">
    <property type="component" value="Chromosome 9"/>
</dbReference>
<dbReference type="RNAct" id="P56677">
    <property type="molecule type" value="protein"/>
</dbReference>
<dbReference type="Bgee" id="ENSMUSG00000031995">
    <property type="expression patterns" value="Expressed in hair follicle and 171 other cell types or tissues"/>
</dbReference>
<dbReference type="ExpressionAtlas" id="P56677">
    <property type="expression patterns" value="baseline and differential"/>
</dbReference>
<dbReference type="GO" id="GO:0016323">
    <property type="term" value="C:basolateral plasma membrane"/>
    <property type="evidence" value="ECO:0007669"/>
    <property type="project" value="Ensembl"/>
</dbReference>
<dbReference type="GO" id="GO:0009897">
    <property type="term" value="C:external side of plasma membrane"/>
    <property type="evidence" value="ECO:0000314"/>
    <property type="project" value="MGI"/>
</dbReference>
<dbReference type="GO" id="GO:0005615">
    <property type="term" value="C:extracellular space"/>
    <property type="evidence" value="ECO:0000314"/>
    <property type="project" value="MGI"/>
</dbReference>
<dbReference type="GO" id="GO:0005886">
    <property type="term" value="C:plasma membrane"/>
    <property type="evidence" value="ECO:0000304"/>
    <property type="project" value="MGI"/>
</dbReference>
<dbReference type="GO" id="GO:0004252">
    <property type="term" value="F:serine-type endopeptidase activity"/>
    <property type="evidence" value="ECO:0000269"/>
    <property type="project" value="Reactome"/>
</dbReference>
<dbReference type="GO" id="GO:0008236">
    <property type="term" value="F:serine-type peptidase activity"/>
    <property type="evidence" value="ECO:0000314"/>
    <property type="project" value="MGI"/>
</dbReference>
<dbReference type="GO" id="GO:0016477">
    <property type="term" value="P:cell migration"/>
    <property type="evidence" value="ECO:0000304"/>
    <property type="project" value="MGI"/>
</dbReference>
<dbReference type="GO" id="GO:0060672">
    <property type="term" value="P:epithelial cell morphogenesis involved in placental branching"/>
    <property type="evidence" value="ECO:0000316"/>
    <property type="project" value="MGI"/>
</dbReference>
<dbReference type="GO" id="GO:0030216">
    <property type="term" value="P:keratinocyte differentiation"/>
    <property type="evidence" value="ECO:0000250"/>
    <property type="project" value="UniProtKB"/>
</dbReference>
<dbReference type="GO" id="GO:0001843">
    <property type="term" value="P:neural tube closure"/>
    <property type="evidence" value="ECO:0000316"/>
    <property type="project" value="MGI"/>
</dbReference>
<dbReference type="GO" id="GO:0030163">
    <property type="term" value="P:protein catabolic process"/>
    <property type="evidence" value="ECO:0007669"/>
    <property type="project" value="Ensembl"/>
</dbReference>
<dbReference type="GO" id="GO:0006508">
    <property type="term" value="P:proteolysis"/>
    <property type="evidence" value="ECO:0000314"/>
    <property type="project" value="MGI"/>
</dbReference>
<dbReference type="CDD" id="cd00041">
    <property type="entry name" value="CUB"/>
    <property type="match status" value="2"/>
</dbReference>
<dbReference type="CDD" id="cd00112">
    <property type="entry name" value="LDLa"/>
    <property type="match status" value="4"/>
</dbReference>
<dbReference type="CDD" id="cd00190">
    <property type="entry name" value="Tryp_SPc"/>
    <property type="match status" value="1"/>
</dbReference>
<dbReference type="FunFam" id="2.60.120.290:FF:000032">
    <property type="entry name" value="Suppressor of tumorigenicity 14 protein homolog"/>
    <property type="match status" value="1"/>
</dbReference>
<dbReference type="FunFam" id="2.60.120.290:FF:000036">
    <property type="entry name" value="Suppressor of tumorigenicity 14 protein homolog"/>
    <property type="match status" value="1"/>
</dbReference>
<dbReference type="FunFam" id="3.30.70.960:FF:000006">
    <property type="entry name" value="Suppressor of tumorigenicity 14 protein homolog"/>
    <property type="match status" value="1"/>
</dbReference>
<dbReference type="FunFam" id="4.10.400.10:FF:000114">
    <property type="entry name" value="Suppressor of tumorigenicity 14 protein homolog"/>
    <property type="match status" value="1"/>
</dbReference>
<dbReference type="FunFam" id="4.10.400.10:FF:000117">
    <property type="entry name" value="Suppressor of tumorigenicity 14 protein homolog"/>
    <property type="match status" value="1"/>
</dbReference>
<dbReference type="FunFam" id="4.10.400.10:FF:000119">
    <property type="entry name" value="Suppressor of tumorigenicity 14 protein homolog"/>
    <property type="match status" value="1"/>
</dbReference>
<dbReference type="FunFam" id="4.10.400.10:FF:000122">
    <property type="entry name" value="Suppressor of tumorigenicity 14 protein homolog"/>
    <property type="match status" value="1"/>
</dbReference>
<dbReference type="FunFam" id="2.40.10.10:FF:000003">
    <property type="entry name" value="Transmembrane serine protease 3"/>
    <property type="match status" value="1"/>
</dbReference>
<dbReference type="Gene3D" id="4.10.400.10">
    <property type="entry name" value="Low-density Lipoprotein Receptor"/>
    <property type="match status" value="4"/>
</dbReference>
<dbReference type="Gene3D" id="3.30.70.960">
    <property type="entry name" value="SEA domain"/>
    <property type="match status" value="1"/>
</dbReference>
<dbReference type="Gene3D" id="2.60.120.290">
    <property type="entry name" value="Spermadhesin, CUB domain"/>
    <property type="match status" value="2"/>
</dbReference>
<dbReference type="Gene3D" id="2.40.10.10">
    <property type="entry name" value="Trypsin-like serine proteases"/>
    <property type="match status" value="2"/>
</dbReference>
<dbReference type="InterPro" id="IPR000859">
    <property type="entry name" value="CUB_dom"/>
</dbReference>
<dbReference type="InterPro" id="IPR036055">
    <property type="entry name" value="LDL_receptor-like_sf"/>
</dbReference>
<dbReference type="InterPro" id="IPR023415">
    <property type="entry name" value="LDLR_class-A_CS"/>
</dbReference>
<dbReference type="InterPro" id="IPR002172">
    <property type="entry name" value="LDrepeatLR_classA_rpt"/>
</dbReference>
<dbReference type="InterPro" id="IPR009003">
    <property type="entry name" value="Peptidase_S1_PA"/>
</dbReference>
<dbReference type="InterPro" id="IPR043504">
    <property type="entry name" value="Peptidase_S1_PA_chymotrypsin"/>
</dbReference>
<dbReference type="InterPro" id="IPR017051">
    <property type="entry name" value="Peptidase_S1A_matripase"/>
</dbReference>
<dbReference type="InterPro" id="IPR000082">
    <property type="entry name" value="SEA_dom"/>
</dbReference>
<dbReference type="InterPro" id="IPR036364">
    <property type="entry name" value="SEA_dom_sf"/>
</dbReference>
<dbReference type="InterPro" id="IPR035914">
    <property type="entry name" value="Sperma_CUB_dom_sf"/>
</dbReference>
<dbReference type="InterPro" id="IPR001254">
    <property type="entry name" value="Trypsin_dom"/>
</dbReference>
<dbReference type="InterPro" id="IPR018114">
    <property type="entry name" value="TRYPSIN_HIS"/>
</dbReference>
<dbReference type="InterPro" id="IPR033116">
    <property type="entry name" value="TRYPSIN_SER"/>
</dbReference>
<dbReference type="PANTHER" id="PTHR24252">
    <property type="entry name" value="ACROSIN-RELATED"/>
    <property type="match status" value="1"/>
</dbReference>
<dbReference type="PANTHER" id="PTHR24252:SF17">
    <property type="entry name" value="SUPPRESSOR OF TUMORIGENICITY 14 PROTEIN HOMOLOG-RELATED"/>
    <property type="match status" value="1"/>
</dbReference>
<dbReference type="Pfam" id="PF00431">
    <property type="entry name" value="CUB"/>
    <property type="match status" value="2"/>
</dbReference>
<dbReference type="Pfam" id="PF00057">
    <property type="entry name" value="Ldl_recept_a"/>
    <property type="match status" value="4"/>
</dbReference>
<dbReference type="Pfam" id="PF01390">
    <property type="entry name" value="SEA"/>
    <property type="match status" value="1"/>
</dbReference>
<dbReference type="Pfam" id="PF00089">
    <property type="entry name" value="Trypsin"/>
    <property type="match status" value="1"/>
</dbReference>
<dbReference type="PIRSF" id="PIRSF036370">
    <property type="entry name" value="ST14"/>
    <property type="match status" value="1"/>
</dbReference>
<dbReference type="PRINTS" id="PR00261">
    <property type="entry name" value="LDLRECEPTOR"/>
</dbReference>
<dbReference type="SMART" id="SM00042">
    <property type="entry name" value="CUB"/>
    <property type="match status" value="2"/>
</dbReference>
<dbReference type="SMART" id="SM00192">
    <property type="entry name" value="LDLa"/>
    <property type="match status" value="4"/>
</dbReference>
<dbReference type="SMART" id="SM00020">
    <property type="entry name" value="Tryp_SPc"/>
    <property type="match status" value="1"/>
</dbReference>
<dbReference type="SUPFAM" id="SSF57424">
    <property type="entry name" value="LDL receptor-like module"/>
    <property type="match status" value="4"/>
</dbReference>
<dbReference type="SUPFAM" id="SSF82671">
    <property type="entry name" value="SEA domain"/>
    <property type="match status" value="1"/>
</dbReference>
<dbReference type="SUPFAM" id="SSF49854">
    <property type="entry name" value="Spermadhesin, CUB domain"/>
    <property type="match status" value="2"/>
</dbReference>
<dbReference type="SUPFAM" id="SSF50494">
    <property type="entry name" value="Trypsin-like serine proteases"/>
    <property type="match status" value="1"/>
</dbReference>
<dbReference type="PROSITE" id="PS01180">
    <property type="entry name" value="CUB"/>
    <property type="match status" value="2"/>
</dbReference>
<dbReference type="PROSITE" id="PS01209">
    <property type="entry name" value="LDLRA_1"/>
    <property type="match status" value="3"/>
</dbReference>
<dbReference type="PROSITE" id="PS50068">
    <property type="entry name" value="LDLRA_2"/>
    <property type="match status" value="4"/>
</dbReference>
<dbReference type="PROSITE" id="PS50024">
    <property type="entry name" value="SEA"/>
    <property type="match status" value="1"/>
</dbReference>
<dbReference type="PROSITE" id="PS50240">
    <property type="entry name" value="TRYPSIN_DOM"/>
    <property type="match status" value="1"/>
</dbReference>
<dbReference type="PROSITE" id="PS00134">
    <property type="entry name" value="TRYPSIN_HIS"/>
    <property type="match status" value="1"/>
</dbReference>
<dbReference type="PROSITE" id="PS00135">
    <property type="entry name" value="TRYPSIN_SER"/>
    <property type="match status" value="1"/>
</dbReference>
<keyword id="KW-1015">Disulfide bond</keyword>
<keyword id="KW-0325">Glycoprotein</keyword>
<keyword id="KW-0378">Hydrolase</keyword>
<keyword id="KW-0472">Membrane</keyword>
<keyword id="KW-0597">Phosphoprotein</keyword>
<keyword id="KW-0645">Protease</keyword>
<keyword id="KW-1185">Reference proteome</keyword>
<keyword id="KW-0677">Repeat</keyword>
<keyword id="KW-0720">Serine protease</keyword>
<keyword id="KW-0735">Signal-anchor</keyword>
<keyword id="KW-0812">Transmembrane</keyword>
<keyword id="KW-1133">Transmembrane helix</keyword>
<feature type="chain" id="PRO_0000088713" description="Suppressor of tumorigenicity 14 protein homolog">
    <location>
        <begin position="1"/>
        <end position="855"/>
    </location>
</feature>
<feature type="topological domain" description="Cytoplasmic" evidence="3">
    <location>
        <begin position="1"/>
        <end position="55"/>
    </location>
</feature>
<feature type="transmembrane region" description="Helical; Signal-anchor for type II membrane protein" evidence="3">
    <location>
        <begin position="56"/>
        <end position="76"/>
    </location>
</feature>
<feature type="topological domain" description="Extracellular" evidence="3">
    <location>
        <begin position="77"/>
        <end position="855"/>
    </location>
</feature>
<feature type="domain" description="SEA" evidence="6">
    <location>
        <begin position="86"/>
        <end position="203"/>
    </location>
</feature>
<feature type="domain" description="CUB 1" evidence="4">
    <location>
        <begin position="214"/>
        <end position="331"/>
    </location>
</feature>
<feature type="domain" description="CUB 2" evidence="4">
    <location>
        <begin position="340"/>
        <end position="444"/>
    </location>
</feature>
<feature type="domain" description="LDL-receptor class A 1" evidence="5">
    <location>
        <begin position="451"/>
        <end position="488"/>
    </location>
</feature>
<feature type="domain" description="LDL-receptor class A 2" evidence="5">
    <location>
        <begin position="489"/>
        <end position="522"/>
    </location>
</feature>
<feature type="domain" description="LDL-receptor class A 3" evidence="5">
    <location>
        <begin position="523"/>
        <end position="561"/>
    </location>
</feature>
<feature type="domain" description="LDL-receptor class A 4" evidence="5">
    <location>
        <begin position="565"/>
        <end position="604"/>
    </location>
</feature>
<feature type="domain" description="Peptidase S1" evidence="7">
    <location>
        <begin position="615"/>
        <end position="854"/>
    </location>
</feature>
<feature type="active site" description="Charge relay system" evidence="1">
    <location>
        <position position="656"/>
    </location>
</feature>
<feature type="active site" description="Charge relay system" evidence="1">
    <location>
        <position position="711"/>
    </location>
</feature>
<feature type="active site" description="Charge relay system" evidence="1">
    <location>
        <position position="805"/>
    </location>
</feature>
<feature type="modified residue" description="Phosphoserine" evidence="10">
    <location>
        <position position="13"/>
    </location>
</feature>
<feature type="glycosylation site" description="N-linked (GlcNAc...) asparagine" evidence="3">
    <location>
        <position position="107"/>
    </location>
</feature>
<feature type="glycosylation site" description="N-linked (GlcNAc...) asparagine" evidence="3">
    <location>
        <position position="302"/>
    </location>
</feature>
<feature type="glycosylation site" description="N-linked (GlcNAc...) asparagine" evidence="3">
    <location>
        <position position="365"/>
    </location>
</feature>
<feature type="glycosylation site" description="N-linked (GlcNAc...) asparagine" evidence="8">
    <location>
        <position position="421"/>
    </location>
</feature>
<feature type="glycosylation site" description="N-linked (GlcNAc...) asparagine" evidence="3">
    <location>
        <position position="489"/>
    </location>
</feature>
<feature type="glycosylation site" description="N-linked (GlcNAc...) asparagine" evidence="3">
    <location>
        <position position="772"/>
    </location>
</feature>
<feature type="disulfide bond" evidence="1">
    <location>
        <begin position="214"/>
        <end position="244"/>
    </location>
</feature>
<feature type="disulfide bond" evidence="1">
    <location>
        <begin position="340"/>
        <end position="366"/>
    </location>
</feature>
<feature type="disulfide bond" evidence="1">
    <location>
        <begin position="397"/>
        <end position="410"/>
    </location>
</feature>
<feature type="disulfide bond" evidence="1">
    <location>
        <begin position="453"/>
        <end position="464"/>
    </location>
</feature>
<feature type="disulfide bond" evidence="1">
    <location>
        <begin position="459"/>
        <end position="477"/>
    </location>
</feature>
<feature type="disulfide bond" evidence="1">
    <location>
        <begin position="471"/>
        <end position="486"/>
    </location>
</feature>
<feature type="disulfide bond" evidence="1">
    <location>
        <begin position="488"/>
        <end position="501"/>
    </location>
</feature>
<feature type="disulfide bond" evidence="1">
    <location>
        <begin position="496"/>
        <end position="514"/>
    </location>
</feature>
<feature type="disulfide bond" evidence="1">
    <location>
        <begin position="508"/>
        <end position="523"/>
    </location>
</feature>
<feature type="disulfide bond" evidence="1">
    <location>
        <begin position="525"/>
        <end position="537"/>
    </location>
</feature>
<feature type="disulfide bond" evidence="1">
    <location>
        <begin position="532"/>
        <end position="550"/>
    </location>
</feature>
<feature type="disulfide bond" evidence="1">
    <location>
        <begin position="544"/>
        <end position="559"/>
    </location>
</feature>
<feature type="disulfide bond" evidence="1">
    <location>
        <begin position="567"/>
        <end position="579"/>
    </location>
</feature>
<feature type="disulfide bond" evidence="1">
    <location>
        <begin position="574"/>
        <end position="593"/>
    </location>
</feature>
<feature type="disulfide bond" evidence="1">
    <location>
        <begin position="587"/>
        <end position="602"/>
    </location>
</feature>
<feature type="disulfide bond" evidence="1">
    <location>
        <begin position="641"/>
        <end position="657"/>
    </location>
</feature>
<feature type="disulfide bond" evidence="1">
    <location>
        <begin position="776"/>
        <end position="790"/>
    </location>
</feature>
<feature type="disulfide bond" evidence="1">
    <location>
        <begin position="801"/>
        <end position="830"/>
    </location>
</feature>
<reference key="1">
    <citation type="journal article" date="1999" name="Immunogenetics">
        <title>Cloning and chromosomal mapping of a gene isolated from thymic stromal cells encoding a new mouse type II membrane serine protease, epithin, containing four LDL receptor modules and two CUB domains.</title>
        <authorList>
            <person name="Kim M.G."/>
            <person name="Chen C."/>
            <person name="Lyu M.S."/>
            <person name="Cho E.G."/>
            <person name="Park D."/>
            <person name="Kozak C."/>
            <person name="Schwartz R.H."/>
        </authorList>
    </citation>
    <scope>NUCLEOTIDE SEQUENCE [MRNA]</scope>
    <source>
        <strain>C.B.17SCID</strain>
        <tissue>Thymus</tissue>
    </source>
</reference>
<reference key="2">
    <citation type="submission" date="2000-03" db="EMBL/GenBank/DDBJ databases">
        <authorList>
            <person name="Kim M.G."/>
            <person name="Chen C."/>
            <person name="Cho E.G."/>
            <person name="Park D."/>
            <person name="Schwartz R.H."/>
        </authorList>
    </citation>
    <scope>SEQUENCE REVISION TO 23; 321; 325; 343; 409-410 AND C-TERMINUS</scope>
</reference>
<reference key="3">
    <citation type="journal article" date="2004" name="Genome Res.">
        <title>The status, quality, and expansion of the NIH full-length cDNA project: the Mammalian Gene Collection (MGC).</title>
        <authorList>
            <consortium name="The MGC Project Team"/>
        </authorList>
    </citation>
    <scope>NUCLEOTIDE SEQUENCE [LARGE SCALE MRNA]</scope>
    <source>
        <tissue>Mammary tumor</tissue>
    </source>
</reference>
<reference key="4">
    <citation type="journal article" date="2009" name="Nat. Biotechnol.">
        <title>Mass-spectrometric identification and relative quantification of N-linked cell surface glycoproteins.</title>
        <authorList>
            <person name="Wollscheid B."/>
            <person name="Bausch-Fluck D."/>
            <person name="Henderson C."/>
            <person name="O'Brien R."/>
            <person name="Bibel M."/>
            <person name="Schiess R."/>
            <person name="Aebersold R."/>
            <person name="Watts J.D."/>
        </authorList>
    </citation>
    <scope>GLYCOSYLATION [LARGE SCALE ANALYSIS] AT ASN-421</scope>
</reference>
<reference key="5">
    <citation type="journal article" date="2010" name="Cell">
        <title>A tissue-specific atlas of mouse protein phosphorylation and expression.</title>
        <authorList>
            <person name="Huttlin E.L."/>
            <person name="Jedrychowski M.P."/>
            <person name="Elias J.E."/>
            <person name="Goswami T."/>
            <person name="Rad R."/>
            <person name="Beausoleil S.A."/>
            <person name="Villen J."/>
            <person name="Haas W."/>
            <person name="Sowa M.E."/>
            <person name="Gygi S.P."/>
        </authorList>
    </citation>
    <scope>PHOSPHORYLATION [LARGE SCALE ANALYSIS] AT SER-13</scope>
    <scope>IDENTIFICATION BY MASS SPECTROMETRY [LARGE SCALE ANALYSIS]</scope>
    <source>
        <tissue>Kidney</tissue>
        <tissue>Pancreas</tissue>
    </source>
</reference>
<name>ST14_MOUSE</name>
<proteinExistence type="evidence at protein level"/>
<protein>
    <recommendedName>
        <fullName>Suppressor of tumorigenicity 14 protein homolog</fullName>
        <ecNumber>3.4.21.109</ecNumber>
    </recommendedName>
    <alternativeName>
        <fullName>Epithin</fullName>
    </alternativeName>
    <alternativeName>
        <fullName>Serine protease 14</fullName>
    </alternativeName>
</protein>
<evidence type="ECO:0000250" key="1"/>
<evidence type="ECO:0000250" key="2">
    <source>
        <dbReference type="UniProtKB" id="Q9Y5Y6"/>
    </source>
</evidence>
<evidence type="ECO:0000255" key="3"/>
<evidence type="ECO:0000255" key="4">
    <source>
        <dbReference type="PROSITE-ProRule" id="PRU00059"/>
    </source>
</evidence>
<evidence type="ECO:0000255" key="5">
    <source>
        <dbReference type="PROSITE-ProRule" id="PRU00124"/>
    </source>
</evidence>
<evidence type="ECO:0000255" key="6">
    <source>
        <dbReference type="PROSITE-ProRule" id="PRU00188"/>
    </source>
</evidence>
<evidence type="ECO:0000255" key="7">
    <source>
        <dbReference type="PROSITE-ProRule" id="PRU00274"/>
    </source>
</evidence>
<evidence type="ECO:0000269" key="8">
    <source>
    </source>
</evidence>
<evidence type="ECO:0000305" key="9"/>
<evidence type="ECO:0007744" key="10">
    <source>
    </source>
</evidence>
<gene>
    <name type="primary">St14</name>
    <name type="synonym">Prss14</name>
</gene>
<accession>P56677</accession>
<sequence length="855" mass="94655">MGSNRGRKAGGGSQDFGAGLKYNSRLENMNGFEEGVEFLPANNAKKVEKRGPRRWVVLVAVLFSFLLLSLMAGLLVWHFHYRNVRVQKVFNGHLRITNEIFLDAYENSTSTEFISLASQVKEALKLLYNEVPVLGPYHKKSAVTAFSEGSVIAYYWSEFSIPPHLAEEVDRAMAVERVVTLPPRARALKSFVLTSVVAFPIDPRMLQRTQDNSCSFALHAHGAAVTRFTTPGFPNSPYPAHARCQWVLRGDADSVLSLTFRSFDVAPCDEHGSDLVTVYDSLSPMEPHAVVRLCGTFSPSYNLTFLSSQNVFLVTLITNTDRRHPGFEATFFQLPKMSSCGGFLSDTQGTFSSPYYPGHYPPNINCTWNIKVPNNRNVKVRFKLFYLVDPNVPVGSCTKDYVEINGEKYCGERSQFVVSSNSSKITVHFHSDHSYTDTGFLAEYLSYDSNDPCPGMFMCKTGRCIRKELRCDGWADCPDYSDERYCRCNATHQFTCKNQFCKPLFWVCDSVNDCGDGSDEEGCSCPAGSFKCSNGKCLPQSQKCNGKDNCGDGSDEASCDSVNVVSCTKYTYRCQNGLCLSKGNPECDGKTDCSDGSDEKNCDCGLRSFTKQARVVGGTNADEGEWPWQVSLHALGQGHLCGASLISPDWLVSAAHCFQDDKNFKYSDYTMWTAFLGLLDQSKRSASGVQELKLKRIITHPSFNDFTFDYDIALLELEKSVEYSTVVRPICLPDATHVFPAGKAIWVTGWGHTKEGGTGALILQKGEIRVINQTTCEDLMPQQITPRMMCVGFLSGGVDSCQGDSGGPLSSAEKDGRMFQAGVVSWGEGCAQRNKPGVYTRLPVVRDWIKEHTGV</sequence>
<comment type="function">
    <text evidence="2">Exhibits trypsin-like activity as defined by cleavage of synthetic substrates with Arg or Lys as the P1 site (By similarity). Involved in the terminal differentiation of keratinocytes through prostasin (PRSS8) activation and filaggrin (FLG) processing (By similarity). Proteolytically cleaves and therefore activates TMPRSS13 (By similarity).</text>
</comment>
<comment type="catalytic activity">
    <reaction>
        <text>Cleaves various synthetic substrates with Arg or Lys at the P1 position and prefers small side-chain amino acids, such as Ala and Gly, at the P2 position.</text>
        <dbReference type="EC" id="3.4.21.109"/>
    </reaction>
</comment>
<comment type="subunit">
    <text evidence="1">Interacts with CDCP1. May interact with TMEFF1 (By similarity).</text>
</comment>
<comment type="subcellular location">
    <subcellularLocation>
        <location evidence="9">Membrane</location>
        <topology evidence="3">Single-pass type II membrane protein</topology>
    </subcellularLocation>
</comment>
<comment type="tissue specificity">
    <text>Highly expressed in intestine, kidney, lung, and thymus. Not expressed in skeletal muscle, liver, heart, testis and brain.</text>
</comment>
<comment type="similarity">
    <text evidence="7">Belongs to the peptidase S1 family.</text>
</comment>
<organism>
    <name type="scientific">Mus musculus</name>
    <name type="common">Mouse</name>
    <dbReference type="NCBI Taxonomy" id="10090"/>
    <lineage>
        <taxon>Eukaryota</taxon>
        <taxon>Metazoa</taxon>
        <taxon>Chordata</taxon>
        <taxon>Craniata</taxon>
        <taxon>Vertebrata</taxon>
        <taxon>Euteleostomi</taxon>
        <taxon>Mammalia</taxon>
        <taxon>Eutheria</taxon>
        <taxon>Euarchontoglires</taxon>
        <taxon>Glires</taxon>
        <taxon>Rodentia</taxon>
        <taxon>Myomorpha</taxon>
        <taxon>Muroidea</taxon>
        <taxon>Muridae</taxon>
        <taxon>Murinae</taxon>
        <taxon>Mus</taxon>
        <taxon>Mus</taxon>
    </lineage>
</organism>